<gene>
    <name type="primary">fliQ</name>
    <name type="ordered locus">CTC_01661</name>
</gene>
<accession>P0CF98</accession>
<reference key="1">
    <citation type="journal article" date="2003" name="Proc. Natl. Acad. Sci. U.S.A.">
        <title>The genome sequence of Clostridium tetani, the causative agent of tetanus disease.</title>
        <authorList>
            <person name="Brueggemann H."/>
            <person name="Baeumer S."/>
            <person name="Fricke W.F."/>
            <person name="Wiezer A."/>
            <person name="Liesegang H."/>
            <person name="Decker I."/>
            <person name="Herzberg C."/>
            <person name="Martinez-Arias R."/>
            <person name="Merkl R."/>
            <person name="Henne A."/>
            <person name="Gottschalk G."/>
        </authorList>
    </citation>
    <scope>NUCLEOTIDE SEQUENCE [LARGE SCALE GENOMIC DNA]</scope>
    <source>
        <strain>Massachusetts / E88</strain>
    </source>
</reference>
<feature type="chain" id="PRO_0000394285" description="Flagellar biosynthetic protein FliQ">
    <location>
        <begin position="1"/>
        <end position="89"/>
    </location>
</feature>
<feature type="transmembrane region" description="Helical" evidence="2">
    <location>
        <begin position="18"/>
        <end position="38"/>
    </location>
</feature>
<feature type="transmembrane region" description="Helical" evidence="2">
    <location>
        <begin position="55"/>
        <end position="75"/>
    </location>
</feature>
<evidence type="ECO:0000250" key="1"/>
<evidence type="ECO:0000255" key="2"/>
<evidence type="ECO:0000305" key="3"/>
<name>FLIQ_CLOTE</name>
<sequence length="89" mass="9635">MSENMIMGVMRDAISTGLLVSAPILISAIVVGLLISILQATTQIQEQTLTFVPKLITVALVGLFTGNWMLHNLVGLTNRIFELIANIVK</sequence>
<organism>
    <name type="scientific">Clostridium tetani (strain Massachusetts / E88)</name>
    <dbReference type="NCBI Taxonomy" id="212717"/>
    <lineage>
        <taxon>Bacteria</taxon>
        <taxon>Bacillati</taxon>
        <taxon>Bacillota</taxon>
        <taxon>Clostridia</taxon>
        <taxon>Eubacteriales</taxon>
        <taxon>Clostridiaceae</taxon>
        <taxon>Clostridium</taxon>
    </lineage>
</organism>
<comment type="function">
    <text evidence="1">Role in flagellar biosynthesis.</text>
</comment>
<comment type="subcellular location">
    <subcellularLocation>
        <location evidence="3">Cell membrane</location>
        <topology evidence="3">Multi-pass membrane protein</topology>
    </subcellularLocation>
    <subcellularLocation>
        <location evidence="1">Bacterial flagellum basal body</location>
    </subcellularLocation>
</comment>
<comment type="similarity">
    <text evidence="3">Belongs to the FliQ/MopD/SpaQ family.</text>
</comment>
<dbReference type="EMBL" id="AE015927">
    <property type="status" value="NOT_ANNOTATED_CDS"/>
    <property type="molecule type" value="Genomic_DNA"/>
</dbReference>
<dbReference type="RefSeq" id="WP_023438579.1">
    <property type="nucleotide sequence ID" value="NC_004557.1"/>
</dbReference>
<dbReference type="SMR" id="P0CF98"/>
<dbReference type="GeneID" id="24253371"/>
<dbReference type="OrthoDB" id="9806440at2"/>
<dbReference type="Proteomes" id="UP000001412">
    <property type="component" value="Chromosome"/>
</dbReference>
<dbReference type="GO" id="GO:0009425">
    <property type="term" value="C:bacterial-type flagellum basal body"/>
    <property type="evidence" value="ECO:0007669"/>
    <property type="project" value="UniProtKB-SubCell"/>
</dbReference>
<dbReference type="GO" id="GO:0005886">
    <property type="term" value="C:plasma membrane"/>
    <property type="evidence" value="ECO:0007669"/>
    <property type="project" value="UniProtKB-SubCell"/>
</dbReference>
<dbReference type="GO" id="GO:0044780">
    <property type="term" value="P:bacterial-type flagellum assembly"/>
    <property type="evidence" value="ECO:0007669"/>
    <property type="project" value="InterPro"/>
</dbReference>
<dbReference type="GO" id="GO:0009306">
    <property type="term" value="P:protein secretion"/>
    <property type="evidence" value="ECO:0007669"/>
    <property type="project" value="InterPro"/>
</dbReference>
<dbReference type="InterPro" id="IPR002191">
    <property type="entry name" value="Bac_export_3"/>
</dbReference>
<dbReference type="InterPro" id="IPR006305">
    <property type="entry name" value="FliQ"/>
</dbReference>
<dbReference type="NCBIfam" id="TIGR01402">
    <property type="entry name" value="fliQ"/>
    <property type="match status" value="1"/>
</dbReference>
<dbReference type="PANTHER" id="PTHR34040">
    <property type="entry name" value="FLAGELLAR BIOSYNTHETIC PROTEIN FLIQ"/>
    <property type="match status" value="1"/>
</dbReference>
<dbReference type="PANTHER" id="PTHR34040:SF2">
    <property type="entry name" value="FLAGELLAR BIOSYNTHETIC PROTEIN FLIQ"/>
    <property type="match status" value="1"/>
</dbReference>
<dbReference type="Pfam" id="PF01313">
    <property type="entry name" value="Bac_export_3"/>
    <property type="match status" value="1"/>
</dbReference>
<dbReference type="PIRSF" id="PIRSF004669">
    <property type="entry name" value="FliQ"/>
    <property type="match status" value="1"/>
</dbReference>
<dbReference type="PRINTS" id="PR00952">
    <property type="entry name" value="TYPE3IMQPROT"/>
</dbReference>
<keyword id="KW-0975">Bacterial flagellum</keyword>
<keyword id="KW-1003">Cell membrane</keyword>
<keyword id="KW-0472">Membrane</keyword>
<keyword id="KW-1185">Reference proteome</keyword>
<keyword id="KW-0812">Transmembrane</keyword>
<keyword id="KW-1133">Transmembrane helix</keyword>
<protein>
    <recommendedName>
        <fullName>Flagellar biosynthetic protein FliQ</fullName>
    </recommendedName>
</protein>
<proteinExistence type="inferred from homology"/>